<sequence>MQRSKIKVEIKRLSHGEDLSLPCYATTQSAGMDLYAALNDSAVLNPLERLLVPTGIVIAIPNGFEGQIRPRSGLAAKHGITVLNSPGTIDSDYRGEVKICLINLSNQPYEIKRGDRIAQILISPVSQVIWDDREEFCAEETGRNAGGFGSSGR</sequence>
<gene>
    <name evidence="1" type="primary">dut</name>
    <name type="ordered locus">WD_0243</name>
</gene>
<organism>
    <name type="scientific">Wolbachia pipientis wMel</name>
    <dbReference type="NCBI Taxonomy" id="163164"/>
    <lineage>
        <taxon>Bacteria</taxon>
        <taxon>Pseudomonadati</taxon>
        <taxon>Pseudomonadota</taxon>
        <taxon>Alphaproteobacteria</taxon>
        <taxon>Rickettsiales</taxon>
        <taxon>Anaplasmataceae</taxon>
        <taxon>Wolbachieae</taxon>
        <taxon>Wolbachia</taxon>
    </lineage>
</organism>
<keyword id="KW-0378">Hydrolase</keyword>
<keyword id="KW-0460">Magnesium</keyword>
<keyword id="KW-0479">Metal-binding</keyword>
<keyword id="KW-0546">Nucleotide metabolism</keyword>
<accession>P61913</accession>
<protein>
    <recommendedName>
        <fullName evidence="1">Deoxyuridine 5'-triphosphate nucleotidohydrolase</fullName>
        <shortName evidence="1">dUTPase</shortName>
        <ecNumber evidence="1">3.6.1.23</ecNumber>
    </recommendedName>
    <alternativeName>
        <fullName evidence="1">dUTP pyrophosphatase</fullName>
    </alternativeName>
</protein>
<name>DUT_WOLPM</name>
<dbReference type="EC" id="3.6.1.23" evidence="1"/>
<dbReference type="EMBL" id="AE017196">
    <property type="protein sequence ID" value="AAS13986.1"/>
    <property type="molecule type" value="Genomic_DNA"/>
</dbReference>
<dbReference type="RefSeq" id="WP_006279458.1">
    <property type="nucleotide sequence ID" value="NZ_OX384529.1"/>
</dbReference>
<dbReference type="SMR" id="P61913"/>
<dbReference type="EnsemblBacteria" id="AAS13986">
    <property type="protein sequence ID" value="AAS13986"/>
    <property type="gene ID" value="WD_0243"/>
</dbReference>
<dbReference type="GeneID" id="70035736"/>
<dbReference type="KEGG" id="wol:WD_0243"/>
<dbReference type="eggNOG" id="COG0756">
    <property type="taxonomic scope" value="Bacteria"/>
</dbReference>
<dbReference type="UniPathway" id="UPA00610">
    <property type="reaction ID" value="UER00666"/>
</dbReference>
<dbReference type="Proteomes" id="UP000008215">
    <property type="component" value="Chromosome"/>
</dbReference>
<dbReference type="GO" id="GO:0004170">
    <property type="term" value="F:dUTP diphosphatase activity"/>
    <property type="evidence" value="ECO:0007669"/>
    <property type="project" value="UniProtKB-UniRule"/>
</dbReference>
<dbReference type="GO" id="GO:0000287">
    <property type="term" value="F:magnesium ion binding"/>
    <property type="evidence" value="ECO:0007669"/>
    <property type="project" value="UniProtKB-UniRule"/>
</dbReference>
<dbReference type="GO" id="GO:0006226">
    <property type="term" value="P:dUMP biosynthetic process"/>
    <property type="evidence" value="ECO:0007669"/>
    <property type="project" value="UniProtKB-UniRule"/>
</dbReference>
<dbReference type="GO" id="GO:0046081">
    <property type="term" value="P:dUTP catabolic process"/>
    <property type="evidence" value="ECO:0007669"/>
    <property type="project" value="InterPro"/>
</dbReference>
<dbReference type="CDD" id="cd07557">
    <property type="entry name" value="trimeric_dUTPase"/>
    <property type="match status" value="1"/>
</dbReference>
<dbReference type="FunFam" id="2.70.40.10:FF:000002">
    <property type="entry name" value="dUTP diphosphatase"/>
    <property type="match status" value="1"/>
</dbReference>
<dbReference type="Gene3D" id="2.70.40.10">
    <property type="match status" value="1"/>
</dbReference>
<dbReference type="HAMAP" id="MF_00116">
    <property type="entry name" value="dUTPase_bact"/>
    <property type="match status" value="1"/>
</dbReference>
<dbReference type="InterPro" id="IPR008181">
    <property type="entry name" value="dUTPase"/>
</dbReference>
<dbReference type="InterPro" id="IPR029054">
    <property type="entry name" value="dUTPase-like"/>
</dbReference>
<dbReference type="InterPro" id="IPR036157">
    <property type="entry name" value="dUTPase-like_sf"/>
</dbReference>
<dbReference type="InterPro" id="IPR033704">
    <property type="entry name" value="dUTPase_trimeric"/>
</dbReference>
<dbReference type="NCBIfam" id="TIGR00576">
    <property type="entry name" value="dut"/>
    <property type="match status" value="1"/>
</dbReference>
<dbReference type="NCBIfam" id="NF001862">
    <property type="entry name" value="PRK00601.1"/>
    <property type="match status" value="1"/>
</dbReference>
<dbReference type="PANTHER" id="PTHR11241">
    <property type="entry name" value="DEOXYURIDINE 5'-TRIPHOSPHATE NUCLEOTIDOHYDROLASE"/>
    <property type="match status" value="1"/>
</dbReference>
<dbReference type="PANTHER" id="PTHR11241:SF0">
    <property type="entry name" value="DEOXYURIDINE 5'-TRIPHOSPHATE NUCLEOTIDOHYDROLASE"/>
    <property type="match status" value="1"/>
</dbReference>
<dbReference type="Pfam" id="PF00692">
    <property type="entry name" value="dUTPase"/>
    <property type="match status" value="1"/>
</dbReference>
<dbReference type="SUPFAM" id="SSF51283">
    <property type="entry name" value="dUTPase-like"/>
    <property type="match status" value="1"/>
</dbReference>
<proteinExistence type="inferred from homology"/>
<reference key="1">
    <citation type="journal article" date="2004" name="PLoS Biol.">
        <title>Phylogenomics of the reproductive parasite Wolbachia pipientis wMel: a streamlined genome overrun by mobile genetic elements.</title>
        <authorList>
            <person name="Wu M."/>
            <person name="Sun L.V."/>
            <person name="Vamathevan J.J."/>
            <person name="Riegler M."/>
            <person name="DeBoy R.T."/>
            <person name="Brownlie J.C."/>
            <person name="McGraw E.A."/>
            <person name="Martin W."/>
            <person name="Esser C."/>
            <person name="Ahmadinejad N."/>
            <person name="Wiegand C."/>
            <person name="Madupu R."/>
            <person name="Beanan M.J."/>
            <person name="Brinkac L.M."/>
            <person name="Daugherty S.C."/>
            <person name="Durkin A.S."/>
            <person name="Kolonay J.F."/>
            <person name="Nelson W.C."/>
            <person name="Mohamoud Y."/>
            <person name="Lee P."/>
            <person name="Berry K.J."/>
            <person name="Young M.B."/>
            <person name="Utterback T.R."/>
            <person name="Weidman J.F."/>
            <person name="Nierman W.C."/>
            <person name="Paulsen I.T."/>
            <person name="Nelson K.E."/>
            <person name="Tettelin H."/>
            <person name="O'Neill S.L."/>
            <person name="Eisen J.A."/>
        </authorList>
    </citation>
    <scope>NUCLEOTIDE SEQUENCE [LARGE SCALE GENOMIC DNA]</scope>
</reference>
<comment type="function">
    <text evidence="1">This enzyme is involved in nucleotide metabolism: it produces dUMP, the immediate precursor of thymidine nucleotides and it decreases the intracellular concentration of dUTP so that uracil cannot be incorporated into DNA.</text>
</comment>
<comment type="catalytic activity">
    <reaction evidence="1">
        <text>dUTP + H2O = dUMP + diphosphate + H(+)</text>
        <dbReference type="Rhea" id="RHEA:10248"/>
        <dbReference type="ChEBI" id="CHEBI:15377"/>
        <dbReference type="ChEBI" id="CHEBI:15378"/>
        <dbReference type="ChEBI" id="CHEBI:33019"/>
        <dbReference type="ChEBI" id="CHEBI:61555"/>
        <dbReference type="ChEBI" id="CHEBI:246422"/>
        <dbReference type="EC" id="3.6.1.23"/>
    </reaction>
</comment>
<comment type="cofactor">
    <cofactor evidence="1">
        <name>Mg(2+)</name>
        <dbReference type="ChEBI" id="CHEBI:18420"/>
    </cofactor>
</comment>
<comment type="pathway">
    <text evidence="1">Pyrimidine metabolism; dUMP biosynthesis; dUMP from dCTP (dUTP route): step 2/2.</text>
</comment>
<comment type="similarity">
    <text evidence="1">Belongs to the dUTPase family.</text>
</comment>
<feature type="chain" id="PRO_0000182917" description="Deoxyuridine 5'-triphosphate nucleotidohydrolase">
    <location>
        <begin position="1"/>
        <end position="153"/>
    </location>
</feature>
<feature type="binding site" evidence="1">
    <location>
        <begin position="71"/>
        <end position="73"/>
    </location>
    <ligand>
        <name>substrate</name>
    </ligand>
</feature>
<feature type="binding site" evidence="1">
    <location>
        <position position="84"/>
    </location>
    <ligand>
        <name>substrate</name>
    </ligand>
</feature>
<feature type="binding site" evidence="1">
    <location>
        <begin position="88"/>
        <end position="90"/>
    </location>
    <ligand>
        <name>substrate</name>
    </ligand>
</feature>
<feature type="binding site" evidence="1">
    <location>
        <position position="98"/>
    </location>
    <ligand>
        <name>substrate</name>
    </ligand>
</feature>
<evidence type="ECO:0000255" key="1">
    <source>
        <dbReference type="HAMAP-Rule" id="MF_00116"/>
    </source>
</evidence>